<organism>
    <name type="scientific">Sinorhizobium fredii (strain NBRC 101917 / NGR234)</name>
    <dbReference type="NCBI Taxonomy" id="394"/>
    <lineage>
        <taxon>Bacteria</taxon>
        <taxon>Pseudomonadati</taxon>
        <taxon>Pseudomonadota</taxon>
        <taxon>Alphaproteobacteria</taxon>
        <taxon>Hyphomicrobiales</taxon>
        <taxon>Rhizobiaceae</taxon>
        <taxon>Sinorhizobium/Ensifer group</taxon>
        <taxon>Sinorhizobium</taxon>
    </lineage>
</organism>
<geneLocation type="plasmid">
    <name>sym pNGR234a</name>
</geneLocation>
<dbReference type="EMBL" id="U00090">
    <property type="protein sequence ID" value="AAB91679.1"/>
    <property type="molecule type" value="Genomic_DNA"/>
</dbReference>
<dbReference type="RefSeq" id="NP_443867.1">
    <property type="nucleotide sequence ID" value="NC_000914.2"/>
</dbReference>
<dbReference type="KEGG" id="rhi:NGR_a03590"/>
<dbReference type="eggNOG" id="COG4584">
    <property type="taxonomic scope" value="Bacteria"/>
</dbReference>
<dbReference type="HOGENOM" id="CLU_1119458_0_0_5"/>
<dbReference type="OrthoDB" id="46712at2"/>
<dbReference type="Proteomes" id="UP000001054">
    <property type="component" value="Plasmid pNGR234a"/>
</dbReference>
<accession>P55461</accession>
<sequence length="248" mass="27700">MRAGQGGSLRLSVCSVIVQAPSRRALDAKARHAVRDDTILRQLKRDAAPRSLIATPQARQVADRFHLYADLRVAIEEQMSLSGRARGRALLPDKIIGNAQVDLIQDDPHVDATHRRRVRHGHRQSRQVVFETVHALRKKGLSCSAIARRTGYGRRSIAKWLTFETPPDRRKSVLKPTSPIKDGNRCGRHLYTISNSAVTSAVSRISSDFSQPGAAPRGRARTVRRRLLSYPINRLAMLSRCGIRRLAT</sequence>
<reference key="1">
    <citation type="journal article" date="1997" name="Nature">
        <title>Molecular basis of symbiosis between Rhizobium and legumes.</title>
        <authorList>
            <person name="Freiberg C.A."/>
            <person name="Fellay R."/>
            <person name="Bairoch A."/>
            <person name="Broughton W.J."/>
            <person name="Rosenthal A."/>
            <person name="Perret X."/>
        </authorList>
    </citation>
    <scope>NUCLEOTIDE SEQUENCE [LARGE SCALE GENOMIC DNA]</scope>
    <source>
        <strain>NBRC 101917 / NGR234</strain>
    </source>
</reference>
<reference key="2">
    <citation type="journal article" date="2009" name="Appl. Environ. Microbiol.">
        <title>Rhizobium sp. strain NGR234 possesses a remarkable number of secretion systems.</title>
        <authorList>
            <person name="Schmeisser C."/>
            <person name="Liesegang H."/>
            <person name="Krysciak D."/>
            <person name="Bakkou N."/>
            <person name="Le Quere A."/>
            <person name="Wollherr A."/>
            <person name="Heinemeyer I."/>
            <person name="Morgenstern B."/>
            <person name="Pommerening-Roeser A."/>
            <person name="Flores M."/>
            <person name="Palacios R."/>
            <person name="Brenner S."/>
            <person name="Gottschalk G."/>
            <person name="Schmitz R.A."/>
            <person name="Broughton W.J."/>
            <person name="Perret X."/>
            <person name="Strittmatter A.W."/>
            <person name="Streit W.R."/>
        </authorList>
    </citation>
    <scope>NUCLEOTIDE SEQUENCE [LARGE SCALE GENOMIC DNA]</scope>
    <source>
        <strain>NBRC 101917 / NGR234</strain>
    </source>
</reference>
<protein>
    <recommendedName>
        <fullName>Uncharacterized protein y4gE</fullName>
    </recommendedName>
</protein>
<name>Y4GE_SINFN</name>
<feature type="chain" id="PRO_0000200845" description="Uncharacterized protein y4gE">
    <location>
        <begin position="1"/>
        <end position="248"/>
    </location>
</feature>
<proteinExistence type="predicted"/>
<gene>
    <name type="ordered locus">NGR_a03590</name>
    <name type="ORF">y4gE</name>
</gene>
<keyword id="KW-0614">Plasmid</keyword>
<keyword id="KW-1185">Reference proteome</keyword>